<evidence type="ECO:0000255" key="1">
    <source>
        <dbReference type="HAMAP-Rule" id="MF_01013"/>
    </source>
</evidence>
<gene>
    <name evidence="1" type="primary">hisF</name>
    <name type="ordered locus">Pmob_1021</name>
</gene>
<keyword id="KW-0028">Amino-acid biosynthesis</keyword>
<keyword id="KW-0963">Cytoplasm</keyword>
<keyword id="KW-0368">Histidine biosynthesis</keyword>
<keyword id="KW-0456">Lyase</keyword>
<protein>
    <recommendedName>
        <fullName evidence="1">Imidazole glycerol phosphate synthase subunit HisF</fullName>
        <ecNumber evidence="1">4.3.2.10</ecNumber>
    </recommendedName>
    <alternativeName>
        <fullName evidence="1">IGP synthase cyclase subunit</fullName>
    </alternativeName>
    <alternativeName>
        <fullName evidence="1">IGP synthase subunit HisF</fullName>
    </alternativeName>
    <alternativeName>
        <fullName evidence="1">ImGP synthase subunit HisF</fullName>
        <shortName evidence="1">IGPS subunit HisF</shortName>
    </alternativeName>
</protein>
<dbReference type="EC" id="4.3.2.10" evidence="1"/>
<dbReference type="EMBL" id="CP000879">
    <property type="protein sequence ID" value="ABX31742.1"/>
    <property type="molecule type" value="Genomic_DNA"/>
</dbReference>
<dbReference type="RefSeq" id="WP_012208845.1">
    <property type="nucleotide sequence ID" value="NC_010003.1"/>
</dbReference>
<dbReference type="SMR" id="A9BJZ9"/>
<dbReference type="STRING" id="403833.Pmob_1021"/>
<dbReference type="KEGG" id="pmo:Pmob_1021"/>
<dbReference type="eggNOG" id="COG0107">
    <property type="taxonomic scope" value="Bacteria"/>
</dbReference>
<dbReference type="HOGENOM" id="CLU_048577_4_0_0"/>
<dbReference type="OrthoDB" id="9781903at2"/>
<dbReference type="UniPathway" id="UPA00031">
    <property type="reaction ID" value="UER00010"/>
</dbReference>
<dbReference type="Proteomes" id="UP000000789">
    <property type="component" value="Chromosome"/>
</dbReference>
<dbReference type="GO" id="GO:0005737">
    <property type="term" value="C:cytoplasm"/>
    <property type="evidence" value="ECO:0007669"/>
    <property type="project" value="UniProtKB-SubCell"/>
</dbReference>
<dbReference type="GO" id="GO:0000107">
    <property type="term" value="F:imidazoleglycerol-phosphate synthase activity"/>
    <property type="evidence" value="ECO:0007669"/>
    <property type="project" value="UniProtKB-UniRule"/>
</dbReference>
<dbReference type="GO" id="GO:0016829">
    <property type="term" value="F:lyase activity"/>
    <property type="evidence" value="ECO:0007669"/>
    <property type="project" value="UniProtKB-KW"/>
</dbReference>
<dbReference type="GO" id="GO:0000105">
    <property type="term" value="P:L-histidine biosynthetic process"/>
    <property type="evidence" value="ECO:0007669"/>
    <property type="project" value="UniProtKB-UniRule"/>
</dbReference>
<dbReference type="CDD" id="cd04731">
    <property type="entry name" value="HisF"/>
    <property type="match status" value="1"/>
</dbReference>
<dbReference type="FunFam" id="3.20.20.70:FF:000006">
    <property type="entry name" value="Imidazole glycerol phosphate synthase subunit HisF"/>
    <property type="match status" value="1"/>
</dbReference>
<dbReference type="Gene3D" id="3.20.20.70">
    <property type="entry name" value="Aldolase class I"/>
    <property type="match status" value="1"/>
</dbReference>
<dbReference type="HAMAP" id="MF_01013">
    <property type="entry name" value="HisF"/>
    <property type="match status" value="1"/>
</dbReference>
<dbReference type="InterPro" id="IPR013785">
    <property type="entry name" value="Aldolase_TIM"/>
</dbReference>
<dbReference type="InterPro" id="IPR006062">
    <property type="entry name" value="His_biosynth"/>
</dbReference>
<dbReference type="InterPro" id="IPR004651">
    <property type="entry name" value="HisF"/>
</dbReference>
<dbReference type="InterPro" id="IPR050064">
    <property type="entry name" value="IGPS_HisA/HisF"/>
</dbReference>
<dbReference type="InterPro" id="IPR011060">
    <property type="entry name" value="RibuloseP-bd_barrel"/>
</dbReference>
<dbReference type="NCBIfam" id="TIGR00735">
    <property type="entry name" value="hisF"/>
    <property type="match status" value="1"/>
</dbReference>
<dbReference type="PANTHER" id="PTHR21235:SF2">
    <property type="entry name" value="IMIDAZOLE GLYCEROL PHOSPHATE SYNTHASE HISHF"/>
    <property type="match status" value="1"/>
</dbReference>
<dbReference type="PANTHER" id="PTHR21235">
    <property type="entry name" value="IMIDAZOLE GLYCEROL PHOSPHATE SYNTHASE SUBUNIT HISF/H IGP SYNTHASE SUBUNIT HISF/H"/>
    <property type="match status" value="1"/>
</dbReference>
<dbReference type="Pfam" id="PF00977">
    <property type="entry name" value="His_biosynth"/>
    <property type="match status" value="1"/>
</dbReference>
<dbReference type="SUPFAM" id="SSF51366">
    <property type="entry name" value="Ribulose-phoshate binding barrel"/>
    <property type="match status" value="1"/>
</dbReference>
<name>HIS6_PETMO</name>
<comment type="function">
    <text evidence="1">IGPS catalyzes the conversion of PRFAR and glutamine to IGP, AICAR and glutamate. The HisF subunit catalyzes the cyclization activity that produces IGP and AICAR from PRFAR using the ammonia provided by the HisH subunit.</text>
</comment>
<comment type="catalytic activity">
    <reaction evidence="1">
        <text>5-[(5-phospho-1-deoxy-D-ribulos-1-ylimino)methylamino]-1-(5-phospho-beta-D-ribosyl)imidazole-4-carboxamide + L-glutamine = D-erythro-1-(imidazol-4-yl)glycerol 3-phosphate + 5-amino-1-(5-phospho-beta-D-ribosyl)imidazole-4-carboxamide + L-glutamate + H(+)</text>
        <dbReference type="Rhea" id="RHEA:24793"/>
        <dbReference type="ChEBI" id="CHEBI:15378"/>
        <dbReference type="ChEBI" id="CHEBI:29985"/>
        <dbReference type="ChEBI" id="CHEBI:58278"/>
        <dbReference type="ChEBI" id="CHEBI:58359"/>
        <dbReference type="ChEBI" id="CHEBI:58475"/>
        <dbReference type="ChEBI" id="CHEBI:58525"/>
        <dbReference type="EC" id="4.3.2.10"/>
    </reaction>
</comment>
<comment type="pathway">
    <text evidence="1">Amino-acid biosynthesis; L-histidine biosynthesis; L-histidine from 5-phospho-alpha-D-ribose 1-diphosphate: step 5/9.</text>
</comment>
<comment type="subunit">
    <text evidence="1">Heterodimer of HisH and HisF.</text>
</comment>
<comment type="subcellular location">
    <subcellularLocation>
        <location evidence="1">Cytoplasm</location>
    </subcellularLocation>
</comment>
<comment type="similarity">
    <text evidence="1">Belongs to the HisA/HisF family.</text>
</comment>
<reference key="1">
    <citation type="submission" date="2007-11" db="EMBL/GenBank/DDBJ databases">
        <title>Complete sequence of Petroga mobilis SJ95.</title>
        <authorList>
            <consortium name="US DOE Joint Genome Institute"/>
            <person name="Copeland A."/>
            <person name="Lucas S."/>
            <person name="Lapidus A."/>
            <person name="Barry K."/>
            <person name="Glavina del Rio T."/>
            <person name="Dalin E."/>
            <person name="Tice H."/>
            <person name="Pitluck S."/>
            <person name="Meincke L."/>
            <person name="Brettin T."/>
            <person name="Bruce D."/>
            <person name="Detter J.C."/>
            <person name="Han C."/>
            <person name="Kuske C.R."/>
            <person name="Schmutz J."/>
            <person name="Larimer F."/>
            <person name="Land M."/>
            <person name="Hauser L."/>
            <person name="Kyrpides N."/>
            <person name="Mikhailova N."/>
            <person name="Noll K."/>
            <person name="Richardson P."/>
        </authorList>
    </citation>
    <scope>NUCLEOTIDE SEQUENCE [LARGE SCALE GENOMIC DNA]</scope>
    <source>
        <strain>DSM 10674 / SJ95</strain>
    </source>
</reference>
<organism>
    <name type="scientific">Petrotoga mobilis (strain DSM 10674 / SJ95)</name>
    <dbReference type="NCBI Taxonomy" id="403833"/>
    <lineage>
        <taxon>Bacteria</taxon>
        <taxon>Thermotogati</taxon>
        <taxon>Thermotogota</taxon>
        <taxon>Thermotogae</taxon>
        <taxon>Petrotogales</taxon>
        <taxon>Petrotogaceae</taxon>
        <taxon>Petrotoga</taxon>
    </lineage>
</organism>
<feature type="chain" id="PRO_1000084069" description="Imidazole glycerol phosphate synthase subunit HisF">
    <location>
        <begin position="1"/>
        <end position="252"/>
    </location>
</feature>
<feature type="active site" evidence="1">
    <location>
        <position position="11"/>
    </location>
</feature>
<feature type="active site" evidence="1">
    <location>
        <position position="130"/>
    </location>
</feature>
<proteinExistence type="inferred from homology"/>
<accession>A9BJZ9</accession>
<sequence length="252" mass="27448">MLTKRIVAALDIKEGRVVKGVQFENIRDAGDPVELAKKYEKDGVDEIVFLDITASKEKRNILKNLVEEIAKELFIPFTVGGGLKTVEQMVEIIKCGADKVFINSAAVENPNLIKESSKIIGSSNVVVAIDAKKDVESEKYYVYTHGGSKKTDLDAVEWARKCQELGAGELLVTSMNTDGVKKGYDLNLTKQIVDAVEIPVIASGGAGEVKDFIDVFQIGADAALAASIFHYGIYTAKDLKIQLKKVGINVRL</sequence>